<organism>
    <name type="scientific">Shigella flexneri serotype 5b (strain 8401)</name>
    <dbReference type="NCBI Taxonomy" id="373384"/>
    <lineage>
        <taxon>Bacteria</taxon>
        <taxon>Pseudomonadati</taxon>
        <taxon>Pseudomonadota</taxon>
        <taxon>Gammaproteobacteria</taxon>
        <taxon>Enterobacterales</taxon>
        <taxon>Enterobacteriaceae</taxon>
        <taxon>Shigella</taxon>
    </lineage>
</organism>
<sequence>MMVIRPVERSDVSALMQLASKTGDGLTSLPANEATLSARIERAIKTWQGELPKSEQGYVFVLEDSETGTVPGICAIEVAVGLNDPWYNYRVGTLVHASKELNVYNALPTLFLSNDHTGSSELCTLFLDPDWRKEGNGYLLSKSRFMFMAAFRDKFNDKVVAEMRGVIDEHGYSPFWQSLGKRFFSMDFSRADFLCGTGQKAFIAELMPKHPIYTHFLSQEAQDVIGQVHPQTAPARAVLEKEGFRYRNYIDIFDGGPTLECDIDRVRAIRKSRLVEVAEGQPAQGDFPACLVANENYHHFRVVLARTDPATERLILTAAQLDALKCHAGDRVRLVRLCAEEKTA</sequence>
<gene>
    <name evidence="1" type="primary">astA</name>
    <name type="ordered locus">SFV_1473</name>
</gene>
<protein>
    <recommendedName>
        <fullName evidence="1">Arginine N-succinyltransferase</fullName>
        <shortName evidence="1">AST</shortName>
        <ecNumber evidence="1">2.3.1.109</ecNumber>
    </recommendedName>
    <alternativeName>
        <fullName evidence="1">AOST</fullName>
    </alternativeName>
</protein>
<keyword id="KW-0012">Acyltransferase</keyword>
<keyword id="KW-0056">Arginine metabolism</keyword>
<keyword id="KW-0808">Transferase</keyword>
<name>ASTA_SHIF8</name>
<comment type="function">
    <text evidence="1">Catalyzes the transfer of succinyl-CoA to arginine to produce N(2)-succinylarginine.</text>
</comment>
<comment type="catalytic activity">
    <reaction evidence="1">
        <text>succinyl-CoA + L-arginine = N(2)-succinyl-L-arginine + CoA + H(+)</text>
        <dbReference type="Rhea" id="RHEA:15185"/>
        <dbReference type="ChEBI" id="CHEBI:15378"/>
        <dbReference type="ChEBI" id="CHEBI:32682"/>
        <dbReference type="ChEBI" id="CHEBI:57287"/>
        <dbReference type="ChEBI" id="CHEBI:57292"/>
        <dbReference type="ChEBI" id="CHEBI:58241"/>
        <dbReference type="EC" id="2.3.1.109"/>
    </reaction>
</comment>
<comment type="pathway">
    <text evidence="1">Amino-acid degradation; L-arginine degradation via AST pathway; L-glutamate and succinate from L-arginine: step 1/5.</text>
</comment>
<comment type="similarity">
    <text evidence="1">Belongs to the arginine N-succinyltransferase family.</text>
</comment>
<dbReference type="EC" id="2.3.1.109" evidence="1"/>
<dbReference type="EMBL" id="CP000266">
    <property type="protein sequence ID" value="ABF03661.1"/>
    <property type="molecule type" value="Genomic_DNA"/>
</dbReference>
<dbReference type="RefSeq" id="WP_000989398.1">
    <property type="nucleotide sequence ID" value="NC_008258.1"/>
</dbReference>
<dbReference type="SMR" id="Q0T4V4"/>
<dbReference type="KEGG" id="sfv:SFV_1473"/>
<dbReference type="HOGENOM" id="CLU_057655_0_0_6"/>
<dbReference type="UniPathway" id="UPA00185">
    <property type="reaction ID" value="UER00279"/>
</dbReference>
<dbReference type="Proteomes" id="UP000000659">
    <property type="component" value="Chromosome"/>
</dbReference>
<dbReference type="GO" id="GO:0008791">
    <property type="term" value="F:arginine N-succinyltransferase activity"/>
    <property type="evidence" value="ECO:0007669"/>
    <property type="project" value="UniProtKB-UniRule"/>
</dbReference>
<dbReference type="GO" id="GO:0019544">
    <property type="term" value="P:arginine catabolic process to glutamate"/>
    <property type="evidence" value="ECO:0007669"/>
    <property type="project" value="UniProtKB-UniRule"/>
</dbReference>
<dbReference type="GO" id="GO:0019545">
    <property type="term" value="P:arginine catabolic process to succinate"/>
    <property type="evidence" value="ECO:0007669"/>
    <property type="project" value="UniProtKB-UniRule"/>
</dbReference>
<dbReference type="Gene3D" id="2.40.40.20">
    <property type="match status" value="1"/>
</dbReference>
<dbReference type="HAMAP" id="MF_01171">
    <property type="entry name" value="AstA"/>
    <property type="match status" value="1"/>
</dbReference>
<dbReference type="InterPro" id="IPR016181">
    <property type="entry name" value="Acyl_CoA_acyltransferase"/>
</dbReference>
<dbReference type="InterPro" id="IPR007041">
    <property type="entry name" value="Arg_succinylTrfase_AstA/AruG"/>
</dbReference>
<dbReference type="InterPro" id="IPR017650">
    <property type="entry name" value="Arginine_N-succinylTrfase"/>
</dbReference>
<dbReference type="NCBIfam" id="TIGR03243">
    <property type="entry name" value="arg_catab_AOST"/>
    <property type="match status" value="1"/>
</dbReference>
<dbReference type="NCBIfam" id="TIGR03244">
    <property type="entry name" value="arg_catab_AstA"/>
    <property type="match status" value="1"/>
</dbReference>
<dbReference type="NCBIfam" id="NF007770">
    <property type="entry name" value="PRK10456.1"/>
    <property type="match status" value="1"/>
</dbReference>
<dbReference type="PANTHER" id="PTHR30420:SF1">
    <property type="entry name" value="ARGININE N-SUCCINYLTRANSFERASE"/>
    <property type="match status" value="1"/>
</dbReference>
<dbReference type="PANTHER" id="PTHR30420">
    <property type="entry name" value="N-SUCCINYLARGININE DIHYDROLASE"/>
    <property type="match status" value="1"/>
</dbReference>
<dbReference type="Pfam" id="PF04958">
    <property type="entry name" value="AstA"/>
    <property type="match status" value="1"/>
</dbReference>
<dbReference type="SUPFAM" id="SSF55729">
    <property type="entry name" value="Acyl-CoA N-acyltransferases (Nat)"/>
    <property type="match status" value="1"/>
</dbReference>
<reference key="1">
    <citation type="journal article" date="2006" name="BMC Genomics">
        <title>Complete genome sequence of Shigella flexneri 5b and comparison with Shigella flexneri 2a.</title>
        <authorList>
            <person name="Nie H."/>
            <person name="Yang F."/>
            <person name="Zhang X."/>
            <person name="Yang J."/>
            <person name="Chen L."/>
            <person name="Wang J."/>
            <person name="Xiong Z."/>
            <person name="Peng J."/>
            <person name="Sun L."/>
            <person name="Dong J."/>
            <person name="Xue Y."/>
            <person name="Xu X."/>
            <person name="Chen S."/>
            <person name="Yao Z."/>
            <person name="Shen Y."/>
            <person name="Jin Q."/>
        </authorList>
    </citation>
    <scope>NUCLEOTIDE SEQUENCE [LARGE SCALE GENOMIC DNA]</scope>
    <source>
        <strain>8401</strain>
    </source>
</reference>
<feature type="chain" id="PRO_1000065710" description="Arginine N-succinyltransferase">
    <location>
        <begin position="1"/>
        <end position="344"/>
    </location>
</feature>
<feature type="active site" description="Proton donor" evidence="1">
    <location>
        <position position="229"/>
    </location>
</feature>
<feature type="binding site" evidence="1">
    <location>
        <position position="125"/>
    </location>
    <ligand>
        <name>succinyl-CoA</name>
        <dbReference type="ChEBI" id="CHEBI:57292"/>
    </ligand>
</feature>
<proteinExistence type="inferred from homology"/>
<accession>Q0T4V4</accession>
<evidence type="ECO:0000255" key="1">
    <source>
        <dbReference type="HAMAP-Rule" id="MF_01171"/>
    </source>
</evidence>